<reference key="1">
    <citation type="submission" date="2008-02" db="EMBL/GenBank/DDBJ databases">
        <title>Genome sequence of Ureaplasma parvum serovar 3.</title>
        <authorList>
            <person name="Methe B.A."/>
            <person name="Glass J."/>
            <person name="Waites K."/>
            <person name="Shrivastava S."/>
        </authorList>
    </citation>
    <scope>NUCLEOTIDE SEQUENCE [LARGE SCALE GENOMIC DNA]</scope>
    <source>
        <strain>ATCC 27815 / 27 / NCTC 11736</strain>
    </source>
</reference>
<comment type="similarity">
    <text evidence="1">Belongs to the bacterial ribosomal protein bL36 family.</text>
</comment>
<organism>
    <name type="scientific">Ureaplasma parvum serovar 3 (strain ATCC 27815 / 27 / NCTC 11736)</name>
    <dbReference type="NCBI Taxonomy" id="505682"/>
    <lineage>
        <taxon>Bacteria</taxon>
        <taxon>Bacillati</taxon>
        <taxon>Mycoplasmatota</taxon>
        <taxon>Mycoplasmoidales</taxon>
        <taxon>Mycoplasmoidaceae</taxon>
        <taxon>Ureaplasma</taxon>
    </lineage>
</organism>
<gene>
    <name evidence="1" type="primary">rpmJ</name>
    <name type="ordered locus">UPA3_0262</name>
</gene>
<proteinExistence type="inferred from homology"/>
<sequence>MKVRASVKAICKDCKIVKRSGVVRVICANSKHKQRQG</sequence>
<feature type="chain" id="PRO_1000078491" description="Large ribosomal subunit protein bL36">
    <location>
        <begin position="1"/>
        <end position="37"/>
    </location>
</feature>
<name>RL36_UREP2</name>
<accession>B1AIP3</accession>
<protein>
    <recommendedName>
        <fullName evidence="1">Large ribosomal subunit protein bL36</fullName>
    </recommendedName>
    <alternativeName>
        <fullName evidence="2">50S ribosomal protein L36</fullName>
    </alternativeName>
</protein>
<keyword id="KW-0687">Ribonucleoprotein</keyword>
<keyword id="KW-0689">Ribosomal protein</keyword>
<evidence type="ECO:0000255" key="1">
    <source>
        <dbReference type="HAMAP-Rule" id="MF_00251"/>
    </source>
</evidence>
<evidence type="ECO:0000305" key="2"/>
<dbReference type="EMBL" id="CP000942">
    <property type="protein sequence ID" value="ACA32791.1"/>
    <property type="molecule type" value="Genomic_DNA"/>
</dbReference>
<dbReference type="RefSeq" id="WP_006688931.1">
    <property type="nucleotide sequence ID" value="NC_010503.1"/>
</dbReference>
<dbReference type="SMR" id="B1AIP3"/>
<dbReference type="GeneID" id="29672460"/>
<dbReference type="KEGG" id="upa:UPA3_0262"/>
<dbReference type="HOGENOM" id="CLU_135723_6_2_14"/>
<dbReference type="Proteomes" id="UP000002162">
    <property type="component" value="Chromosome"/>
</dbReference>
<dbReference type="GO" id="GO:0005737">
    <property type="term" value="C:cytoplasm"/>
    <property type="evidence" value="ECO:0007669"/>
    <property type="project" value="UniProtKB-ARBA"/>
</dbReference>
<dbReference type="GO" id="GO:1990904">
    <property type="term" value="C:ribonucleoprotein complex"/>
    <property type="evidence" value="ECO:0007669"/>
    <property type="project" value="UniProtKB-KW"/>
</dbReference>
<dbReference type="GO" id="GO:0005840">
    <property type="term" value="C:ribosome"/>
    <property type="evidence" value="ECO:0007669"/>
    <property type="project" value="UniProtKB-KW"/>
</dbReference>
<dbReference type="GO" id="GO:0003735">
    <property type="term" value="F:structural constituent of ribosome"/>
    <property type="evidence" value="ECO:0007669"/>
    <property type="project" value="InterPro"/>
</dbReference>
<dbReference type="GO" id="GO:0006412">
    <property type="term" value="P:translation"/>
    <property type="evidence" value="ECO:0007669"/>
    <property type="project" value="UniProtKB-UniRule"/>
</dbReference>
<dbReference type="HAMAP" id="MF_00251">
    <property type="entry name" value="Ribosomal_bL36"/>
    <property type="match status" value="1"/>
</dbReference>
<dbReference type="InterPro" id="IPR000473">
    <property type="entry name" value="Ribosomal_bL36"/>
</dbReference>
<dbReference type="InterPro" id="IPR035977">
    <property type="entry name" value="Ribosomal_bL36_sp"/>
</dbReference>
<dbReference type="NCBIfam" id="TIGR01022">
    <property type="entry name" value="rpmJ_bact"/>
    <property type="match status" value="1"/>
</dbReference>
<dbReference type="PANTHER" id="PTHR42888">
    <property type="entry name" value="50S RIBOSOMAL PROTEIN L36, CHLOROPLASTIC"/>
    <property type="match status" value="1"/>
</dbReference>
<dbReference type="PANTHER" id="PTHR42888:SF1">
    <property type="entry name" value="LARGE RIBOSOMAL SUBUNIT PROTEIN BL36C"/>
    <property type="match status" value="1"/>
</dbReference>
<dbReference type="Pfam" id="PF00444">
    <property type="entry name" value="Ribosomal_L36"/>
    <property type="match status" value="1"/>
</dbReference>
<dbReference type="SUPFAM" id="SSF57840">
    <property type="entry name" value="Ribosomal protein L36"/>
    <property type="match status" value="1"/>
</dbReference>
<dbReference type="PROSITE" id="PS00828">
    <property type="entry name" value="RIBOSOMAL_L36"/>
    <property type="match status" value="1"/>
</dbReference>